<gene>
    <name evidence="1" type="primary">rpsC</name>
    <name evidence="1" type="synonym">rps3</name>
    <name type="ordered locus">CYB_2603</name>
</gene>
<organism>
    <name type="scientific">Synechococcus sp. (strain JA-2-3B'a(2-13))</name>
    <name type="common">Cyanobacteria bacterium Yellowstone B-Prime</name>
    <dbReference type="NCBI Taxonomy" id="321332"/>
    <lineage>
        <taxon>Bacteria</taxon>
        <taxon>Bacillati</taxon>
        <taxon>Cyanobacteriota</taxon>
        <taxon>Cyanophyceae</taxon>
        <taxon>Synechococcales</taxon>
        <taxon>Synechococcaceae</taxon>
        <taxon>Synechococcus</taxon>
    </lineage>
</organism>
<protein>
    <recommendedName>
        <fullName evidence="1">Small ribosomal subunit protein uS3</fullName>
    </recommendedName>
    <alternativeName>
        <fullName evidence="3">30S ribosomal protein S3</fullName>
    </alternativeName>
</protein>
<keyword id="KW-1185">Reference proteome</keyword>
<keyword id="KW-0687">Ribonucleoprotein</keyword>
<keyword id="KW-0689">Ribosomal protein</keyword>
<keyword id="KW-0694">RNA-binding</keyword>
<keyword id="KW-0699">rRNA-binding</keyword>
<name>RS3_SYNJB</name>
<accession>Q2JIM1</accession>
<proteinExistence type="inferred from homology"/>
<feature type="chain" id="PRO_0000293906" description="Small ribosomal subunit protein uS3">
    <location>
        <begin position="1"/>
        <end position="256"/>
    </location>
</feature>
<feature type="domain" description="KH type-2" evidence="1">
    <location>
        <begin position="39"/>
        <end position="121"/>
    </location>
</feature>
<feature type="region of interest" description="Disordered" evidence="2">
    <location>
        <begin position="227"/>
        <end position="256"/>
    </location>
</feature>
<feature type="compositionally biased region" description="Basic and acidic residues" evidence="2">
    <location>
        <begin position="246"/>
        <end position="256"/>
    </location>
</feature>
<reference key="1">
    <citation type="journal article" date="2007" name="ISME J.">
        <title>Population level functional diversity in a microbial community revealed by comparative genomic and metagenomic analyses.</title>
        <authorList>
            <person name="Bhaya D."/>
            <person name="Grossman A.R."/>
            <person name="Steunou A.-S."/>
            <person name="Khuri N."/>
            <person name="Cohan F.M."/>
            <person name="Hamamura N."/>
            <person name="Melendrez M.C."/>
            <person name="Bateson M.M."/>
            <person name="Ward D.M."/>
            <person name="Heidelberg J.F."/>
        </authorList>
    </citation>
    <scope>NUCLEOTIDE SEQUENCE [LARGE SCALE GENOMIC DNA]</scope>
    <source>
        <strain>JA-2-3B'a(2-13)</strain>
    </source>
</reference>
<evidence type="ECO:0000255" key="1">
    <source>
        <dbReference type="HAMAP-Rule" id="MF_01309"/>
    </source>
</evidence>
<evidence type="ECO:0000256" key="2">
    <source>
        <dbReference type="SAM" id="MobiDB-lite"/>
    </source>
</evidence>
<evidence type="ECO:0000305" key="3"/>
<dbReference type="EMBL" id="CP000240">
    <property type="protein sequence ID" value="ABD03533.1"/>
    <property type="molecule type" value="Genomic_DNA"/>
</dbReference>
<dbReference type="RefSeq" id="WP_011434158.1">
    <property type="nucleotide sequence ID" value="NC_007776.1"/>
</dbReference>
<dbReference type="SMR" id="Q2JIM1"/>
<dbReference type="STRING" id="321332.CYB_2603"/>
<dbReference type="KEGG" id="cyb:CYB_2603"/>
<dbReference type="eggNOG" id="COG0092">
    <property type="taxonomic scope" value="Bacteria"/>
</dbReference>
<dbReference type="HOGENOM" id="CLU_058591_0_2_3"/>
<dbReference type="OrthoDB" id="9806396at2"/>
<dbReference type="Proteomes" id="UP000001938">
    <property type="component" value="Chromosome"/>
</dbReference>
<dbReference type="GO" id="GO:0022627">
    <property type="term" value="C:cytosolic small ribosomal subunit"/>
    <property type="evidence" value="ECO:0007669"/>
    <property type="project" value="TreeGrafter"/>
</dbReference>
<dbReference type="GO" id="GO:0003729">
    <property type="term" value="F:mRNA binding"/>
    <property type="evidence" value="ECO:0007669"/>
    <property type="project" value="UniProtKB-UniRule"/>
</dbReference>
<dbReference type="GO" id="GO:0019843">
    <property type="term" value="F:rRNA binding"/>
    <property type="evidence" value="ECO:0007669"/>
    <property type="project" value="UniProtKB-UniRule"/>
</dbReference>
<dbReference type="GO" id="GO:0003735">
    <property type="term" value="F:structural constituent of ribosome"/>
    <property type="evidence" value="ECO:0007669"/>
    <property type="project" value="InterPro"/>
</dbReference>
<dbReference type="GO" id="GO:0006412">
    <property type="term" value="P:translation"/>
    <property type="evidence" value="ECO:0007669"/>
    <property type="project" value="UniProtKB-UniRule"/>
</dbReference>
<dbReference type="CDD" id="cd02412">
    <property type="entry name" value="KH-II_30S_S3"/>
    <property type="match status" value="1"/>
</dbReference>
<dbReference type="FunFam" id="3.30.300.20:FF:000001">
    <property type="entry name" value="30S ribosomal protein S3"/>
    <property type="match status" value="1"/>
</dbReference>
<dbReference type="Gene3D" id="3.30.300.20">
    <property type="match status" value="1"/>
</dbReference>
<dbReference type="Gene3D" id="3.30.1140.32">
    <property type="entry name" value="Ribosomal protein S3, C-terminal domain"/>
    <property type="match status" value="1"/>
</dbReference>
<dbReference type="HAMAP" id="MF_01309_B">
    <property type="entry name" value="Ribosomal_uS3_B"/>
    <property type="match status" value="1"/>
</dbReference>
<dbReference type="InterPro" id="IPR004087">
    <property type="entry name" value="KH_dom"/>
</dbReference>
<dbReference type="InterPro" id="IPR015946">
    <property type="entry name" value="KH_dom-like_a/b"/>
</dbReference>
<dbReference type="InterPro" id="IPR004044">
    <property type="entry name" value="KH_dom_type_2"/>
</dbReference>
<dbReference type="InterPro" id="IPR009019">
    <property type="entry name" value="KH_sf_prok-type"/>
</dbReference>
<dbReference type="InterPro" id="IPR036419">
    <property type="entry name" value="Ribosomal_S3_C_sf"/>
</dbReference>
<dbReference type="InterPro" id="IPR005704">
    <property type="entry name" value="Ribosomal_uS3_bac-typ"/>
</dbReference>
<dbReference type="InterPro" id="IPR001351">
    <property type="entry name" value="Ribosomal_uS3_C"/>
</dbReference>
<dbReference type="InterPro" id="IPR018280">
    <property type="entry name" value="Ribosomal_uS3_CS"/>
</dbReference>
<dbReference type="NCBIfam" id="TIGR01009">
    <property type="entry name" value="rpsC_bact"/>
    <property type="match status" value="1"/>
</dbReference>
<dbReference type="PANTHER" id="PTHR11760">
    <property type="entry name" value="30S/40S RIBOSOMAL PROTEIN S3"/>
    <property type="match status" value="1"/>
</dbReference>
<dbReference type="PANTHER" id="PTHR11760:SF19">
    <property type="entry name" value="SMALL RIBOSOMAL SUBUNIT PROTEIN US3C"/>
    <property type="match status" value="1"/>
</dbReference>
<dbReference type="Pfam" id="PF07650">
    <property type="entry name" value="KH_2"/>
    <property type="match status" value="1"/>
</dbReference>
<dbReference type="Pfam" id="PF00189">
    <property type="entry name" value="Ribosomal_S3_C"/>
    <property type="match status" value="1"/>
</dbReference>
<dbReference type="SMART" id="SM00322">
    <property type="entry name" value="KH"/>
    <property type="match status" value="1"/>
</dbReference>
<dbReference type="SUPFAM" id="SSF54814">
    <property type="entry name" value="Prokaryotic type KH domain (KH-domain type II)"/>
    <property type="match status" value="1"/>
</dbReference>
<dbReference type="SUPFAM" id="SSF54821">
    <property type="entry name" value="Ribosomal protein S3 C-terminal domain"/>
    <property type="match status" value="1"/>
</dbReference>
<dbReference type="PROSITE" id="PS50823">
    <property type="entry name" value="KH_TYPE_2"/>
    <property type="match status" value="1"/>
</dbReference>
<dbReference type="PROSITE" id="PS00548">
    <property type="entry name" value="RIBOSOMAL_S3"/>
    <property type="match status" value="1"/>
</dbReference>
<sequence>MGQKIHPTGFRLGVIKEHRSRWFADPARYPALLQEDDQIRTYLTKQLSSAGLADIQIERKADQIDLEIRAARPGVVVGRGGSSLETLRQGLQKELSALAGQSPGSRGGGERTIRINVVEVTRADAEATLLAENIAQQLERRIAFRRIVRQVIQRAQRAGVQGIKIQIAGRLNGAEIARTEWTREGRIPLHTLRADIDYAEHLAHTTFGIIGVKVWVFKGEVLPGQERHEQKFPLQQPKRRQQRRRPTFEDRSAQEA</sequence>
<comment type="function">
    <text evidence="1">Binds the lower part of the 30S subunit head. Binds mRNA in the 70S ribosome, positioning it for translation.</text>
</comment>
<comment type="subunit">
    <text evidence="1">Part of the 30S ribosomal subunit. Forms a tight complex with proteins S10 and S14.</text>
</comment>
<comment type="similarity">
    <text evidence="1">Belongs to the universal ribosomal protein uS3 family.</text>
</comment>